<accession>P9WP21</accession>
<accession>L0T666</accession>
<accession>O05302</accession>
<accession>Q7D8M6</accession>
<dbReference type="EC" id="2.3.1.117" evidence="3"/>
<dbReference type="EMBL" id="AL123456">
    <property type="protein sequence ID" value="CCP43957.1"/>
    <property type="molecule type" value="Genomic_DNA"/>
</dbReference>
<dbReference type="PIR" id="G70608">
    <property type="entry name" value="G70608"/>
</dbReference>
<dbReference type="RefSeq" id="NP_215717.1">
    <property type="nucleotide sequence ID" value="NC_000962.3"/>
</dbReference>
<dbReference type="RefSeq" id="WP_003898768.1">
    <property type="nucleotide sequence ID" value="NZ_NVQJ01000039.1"/>
</dbReference>
<dbReference type="PDB" id="3FSX">
    <property type="method" value="X-ray"/>
    <property type="resolution" value="2.15 A"/>
    <property type="chains" value="A/B/C/D/E=2-317"/>
</dbReference>
<dbReference type="PDB" id="3FSY">
    <property type="method" value="X-ray"/>
    <property type="resolution" value="1.97 A"/>
    <property type="chains" value="A/B/C/D/E=2-317"/>
</dbReference>
<dbReference type="PDBsum" id="3FSX"/>
<dbReference type="PDBsum" id="3FSY"/>
<dbReference type="SMR" id="P9WP21"/>
<dbReference type="FunCoup" id="P9WP21">
    <property type="interactions" value="111"/>
</dbReference>
<dbReference type="STRING" id="83332.Rv1201c"/>
<dbReference type="PaxDb" id="83332-Rv1201c"/>
<dbReference type="DNASU" id="886088"/>
<dbReference type="GeneID" id="886088"/>
<dbReference type="KEGG" id="mtu:Rv1201c"/>
<dbReference type="KEGG" id="mtv:RVBD_1201c"/>
<dbReference type="PATRIC" id="fig|83332.111.peg.1342"/>
<dbReference type="TubercuList" id="Rv1201c"/>
<dbReference type="eggNOG" id="COG2171">
    <property type="taxonomic scope" value="Bacteria"/>
</dbReference>
<dbReference type="InParanoid" id="P9WP21"/>
<dbReference type="OrthoDB" id="9782799at2"/>
<dbReference type="PhylomeDB" id="P9WP21"/>
<dbReference type="BRENDA" id="2.3.1.117">
    <property type="organism ID" value="3445"/>
</dbReference>
<dbReference type="UniPathway" id="UPA00034">
    <property type="reaction ID" value="UER00019"/>
</dbReference>
<dbReference type="EvolutionaryTrace" id="P9WP21"/>
<dbReference type="Proteomes" id="UP000001584">
    <property type="component" value="Chromosome"/>
</dbReference>
<dbReference type="GO" id="GO:0005737">
    <property type="term" value="C:cytoplasm"/>
    <property type="evidence" value="ECO:0007669"/>
    <property type="project" value="UniProtKB-SubCell"/>
</dbReference>
<dbReference type="GO" id="GO:0009274">
    <property type="term" value="C:peptidoglycan-based cell wall"/>
    <property type="evidence" value="ECO:0007005"/>
    <property type="project" value="MTBBASE"/>
</dbReference>
<dbReference type="GO" id="GO:0005886">
    <property type="term" value="C:plasma membrane"/>
    <property type="evidence" value="ECO:0007005"/>
    <property type="project" value="MTBBASE"/>
</dbReference>
<dbReference type="GO" id="GO:0008666">
    <property type="term" value="F:2,3,4,5-tetrahydropyridine-2,6-dicarboxylate N-succinyltransferase activity"/>
    <property type="evidence" value="ECO:0000314"/>
    <property type="project" value="MTBBASE"/>
</dbReference>
<dbReference type="GO" id="GO:0000287">
    <property type="term" value="F:magnesium ion binding"/>
    <property type="evidence" value="ECO:0000314"/>
    <property type="project" value="MTBBASE"/>
</dbReference>
<dbReference type="GO" id="GO:0031402">
    <property type="term" value="F:sodium ion binding"/>
    <property type="evidence" value="ECO:0000314"/>
    <property type="project" value="MTBBASE"/>
</dbReference>
<dbReference type="GO" id="GO:0120226">
    <property type="term" value="F:succinyl-CoA binding"/>
    <property type="evidence" value="ECO:0000314"/>
    <property type="project" value="UniProtKB"/>
</dbReference>
<dbReference type="GO" id="GO:0019877">
    <property type="term" value="P:diaminopimelate biosynthetic process"/>
    <property type="evidence" value="ECO:0007669"/>
    <property type="project" value="UniProtKB-UniRule"/>
</dbReference>
<dbReference type="GO" id="GO:0009089">
    <property type="term" value="P:lysine biosynthetic process via diaminopimelate"/>
    <property type="evidence" value="ECO:0007669"/>
    <property type="project" value="UniProtKB-UniRule"/>
</dbReference>
<dbReference type="CDD" id="cd04649">
    <property type="entry name" value="LbH_THP_succinylT_putative"/>
    <property type="match status" value="1"/>
</dbReference>
<dbReference type="FunFam" id="2.160.10.10:FF:000009">
    <property type="entry name" value="2,3,4,5-tetrahydropyridine-2,6-dicarboxylate N-succinyltransferase"/>
    <property type="match status" value="1"/>
</dbReference>
<dbReference type="FunFam" id="3.30.70.2010:FF:000002">
    <property type="entry name" value="2,3,4,5-tetrahydropyridine-2,6-dicarboxylate N-succinyltransferase"/>
    <property type="match status" value="1"/>
</dbReference>
<dbReference type="Gene3D" id="3.30.70.2010">
    <property type="match status" value="1"/>
</dbReference>
<dbReference type="Gene3D" id="2.160.10.10">
    <property type="entry name" value="Hexapeptide repeat proteins"/>
    <property type="match status" value="1"/>
</dbReference>
<dbReference type="Gene3D" id="3.30.60.70">
    <property type="entry name" value="Trimeric LpxA-like enzymes"/>
    <property type="match status" value="1"/>
</dbReference>
<dbReference type="HAMAP" id="MF_02122">
    <property type="entry name" value="DapD_type2"/>
    <property type="match status" value="1"/>
</dbReference>
<dbReference type="InterPro" id="IPR019875">
    <property type="entry name" value="DapD_actinobacteria"/>
</dbReference>
<dbReference type="InterPro" id="IPR001451">
    <property type="entry name" value="Hexapep"/>
</dbReference>
<dbReference type="InterPro" id="IPR032784">
    <property type="entry name" value="THDPS_M"/>
</dbReference>
<dbReference type="InterPro" id="IPR038361">
    <property type="entry name" value="THDPS_M_sf"/>
</dbReference>
<dbReference type="InterPro" id="IPR011004">
    <property type="entry name" value="Trimer_LpxA-like_sf"/>
</dbReference>
<dbReference type="InterPro" id="IPR026586">
    <property type="entry name" value="Type2_DapD"/>
</dbReference>
<dbReference type="NCBIfam" id="TIGR03535">
    <property type="entry name" value="DapD_actino"/>
    <property type="match status" value="1"/>
</dbReference>
<dbReference type="Pfam" id="PF14602">
    <property type="entry name" value="Hexapep_2"/>
    <property type="match status" value="1"/>
</dbReference>
<dbReference type="Pfam" id="PF14789">
    <property type="entry name" value="THDPS_M"/>
    <property type="match status" value="1"/>
</dbReference>
<dbReference type="SUPFAM" id="SSF51161">
    <property type="entry name" value="Trimeric LpxA-like enzymes"/>
    <property type="match status" value="1"/>
</dbReference>
<organism>
    <name type="scientific">Mycobacterium tuberculosis (strain ATCC 25618 / H37Rv)</name>
    <dbReference type="NCBI Taxonomy" id="83332"/>
    <lineage>
        <taxon>Bacteria</taxon>
        <taxon>Bacillati</taxon>
        <taxon>Actinomycetota</taxon>
        <taxon>Actinomycetes</taxon>
        <taxon>Mycobacteriales</taxon>
        <taxon>Mycobacteriaceae</taxon>
        <taxon>Mycobacterium</taxon>
        <taxon>Mycobacterium tuberculosis complex</taxon>
    </lineage>
</organism>
<evidence type="ECO:0000255" key="1">
    <source>
        <dbReference type="HAMAP-Rule" id="MF_02122"/>
    </source>
</evidence>
<evidence type="ECO:0000269" key="2">
    <source>
    </source>
</evidence>
<evidence type="ECO:0000269" key="3">
    <source>
    </source>
</evidence>
<evidence type="ECO:0000305" key="4">
    <source>
    </source>
</evidence>
<evidence type="ECO:0000305" key="5">
    <source>
    </source>
</evidence>
<evidence type="ECO:0007829" key="6">
    <source>
        <dbReference type="PDB" id="3FSX"/>
    </source>
</evidence>
<evidence type="ECO:0007829" key="7">
    <source>
        <dbReference type="PDB" id="3FSY"/>
    </source>
</evidence>
<proteinExistence type="evidence at protein level"/>
<protein>
    <recommendedName>
        <fullName evidence="1">2,3,4,5-tetrahydropyridine-2,6-dicarboxylate N-succinyltransferase</fullName>
        <ecNumber evidence="3">2.3.1.117</ecNumber>
    </recommendedName>
    <alternativeName>
        <fullName evidence="1">Tetrahydrodipicolinate N-succinyltransferase</fullName>
        <shortName evidence="1">THDP succinyltransferase</shortName>
        <shortName evidence="1">THP succinyltransferase</shortName>
    </alternativeName>
    <alternativeName>
        <fullName evidence="1">Tetrahydropicolinate succinylase</fullName>
    </alternativeName>
</protein>
<reference key="1">
    <citation type="journal article" date="1998" name="Nature">
        <title>Deciphering the biology of Mycobacterium tuberculosis from the complete genome sequence.</title>
        <authorList>
            <person name="Cole S.T."/>
            <person name="Brosch R."/>
            <person name="Parkhill J."/>
            <person name="Garnier T."/>
            <person name="Churcher C.M."/>
            <person name="Harris D.E."/>
            <person name="Gordon S.V."/>
            <person name="Eiglmeier K."/>
            <person name="Gas S."/>
            <person name="Barry C.E. III"/>
            <person name="Tekaia F."/>
            <person name="Badcock K."/>
            <person name="Basham D."/>
            <person name="Brown D."/>
            <person name="Chillingworth T."/>
            <person name="Connor R."/>
            <person name="Davies R.M."/>
            <person name="Devlin K."/>
            <person name="Feltwell T."/>
            <person name="Gentles S."/>
            <person name="Hamlin N."/>
            <person name="Holroyd S."/>
            <person name="Hornsby T."/>
            <person name="Jagels K."/>
            <person name="Krogh A."/>
            <person name="McLean J."/>
            <person name="Moule S."/>
            <person name="Murphy L.D."/>
            <person name="Oliver S."/>
            <person name="Osborne J."/>
            <person name="Quail M.A."/>
            <person name="Rajandream M.A."/>
            <person name="Rogers J."/>
            <person name="Rutter S."/>
            <person name="Seeger K."/>
            <person name="Skelton S."/>
            <person name="Squares S."/>
            <person name="Squares R."/>
            <person name="Sulston J.E."/>
            <person name="Taylor K."/>
            <person name="Whitehead S."/>
            <person name="Barrell B.G."/>
        </authorList>
    </citation>
    <scope>NUCLEOTIDE SEQUENCE [LARGE SCALE GENOMIC DNA]</scope>
    <source>
        <strain>ATCC 25618 / H37Rv</strain>
    </source>
</reference>
<reference key="2">
    <citation type="journal article" date="2008" name="Acta Crystallogr. F">
        <title>Cloning, expression, purification, crystallization and preliminary X-ray diffraction analysis of tetrahydrodipicolinate-N-succinyltransferase (Rv1201c) from Mycobacterium tuberculosis.</title>
        <authorList>
            <person name="Schuldt L."/>
            <person name="Weyand S."/>
            <person name="Kefala G."/>
            <person name="Weiss M.S."/>
        </authorList>
    </citation>
    <scope>CRYSTALLIZATION</scope>
    <scope>SUBUNIT</scope>
    <source>
        <strain>ATCC 25618 / H37Rv</strain>
    </source>
</reference>
<reference key="3">
    <citation type="journal article" date="2008" name="BMC Syst. Biol.">
        <title>targetTB: a target identification pipeline for Mycobacterium tuberculosis through an interactome, reactome and genome-scale structural analysis.</title>
        <authorList>
            <person name="Raman K."/>
            <person name="Yeturu K."/>
            <person name="Chandra N."/>
        </authorList>
    </citation>
    <scope>IDENTIFICATION AS A DRUG TARGET [LARGE SCALE ANALYSIS]</scope>
    <source>
        <strain>ATCC 25618 / H37Rv</strain>
    </source>
</reference>
<reference key="4">
    <citation type="journal article" date="2011" name="Mol. Cell. Proteomics">
        <title>Proteogenomic analysis of Mycobacterium tuberculosis by high resolution mass spectrometry.</title>
        <authorList>
            <person name="Kelkar D.S."/>
            <person name="Kumar D."/>
            <person name="Kumar P."/>
            <person name="Balakrishnan L."/>
            <person name="Muthusamy B."/>
            <person name="Yadav A.K."/>
            <person name="Shrivastava P."/>
            <person name="Marimuthu A."/>
            <person name="Anand S."/>
            <person name="Sundaram H."/>
            <person name="Kingsbury R."/>
            <person name="Harsha H.C."/>
            <person name="Nair B."/>
            <person name="Prasad T.S."/>
            <person name="Chauhan D.S."/>
            <person name="Katoch K."/>
            <person name="Katoch V.M."/>
            <person name="Kumar P."/>
            <person name="Chaerkady R."/>
            <person name="Ramachandran S."/>
            <person name="Dash D."/>
            <person name="Pandey A."/>
        </authorList>
    </citation>
    <scope>IDENTIFICATION BY MASS SPECTROMETRY [LARGE SCALE ANALYSIS]</scope>
    <source>
        <strain>ATCC 25618 / H37Rv</strain>
    </source>
</reference>
<reference key="5">
    <citation type="journal article" date="2009" name="J. Mol. Biol.">
        <title>The three-dimensional structure of a mycobacterial DapD provides insights into DapD diversity and reveals unexpected particulars about the enzymatic mechanism.</title>
        <authorList>
            <person name="Schuldt L."/>
            <person name="Weyand S."/>
            <person name="Kefala G."/>
            <person name="Weiss M.S."/>
        </authorList>
    </citation>
    <scope>X-RAY CRYSTALLOGRAPHY (1.97 ANGSTROMS) OF APOENZYME AND COMPLEX WITH SUCCINYL-COA AND MAGNESIUM</scope>
    <scope>FUNCTION</scope>
    <scope>CATALYTIC ACTIVITY</scope>
    <scope>ACTIVITY REGULATION</scope>
    <scope>ACTIVE SITE</scope>
    <scope>REACTION MECHANISM</scope>
    <scope>MUTAGENESIS OF GLU-199 AND GLY-222</scope>
    <source>
        <strain>ATCC 25618 / H37Rv</strain>
    </source>
</reference>
<sequence>MSTVTGAAGIGLATLAADGSVLDTWFPAPELTESGTSATSRLAVSDVPVELAALIGRDDDRRTETIAVRTVIGSLDDVAADPYDAYLRLHLLSHRLVAPHGLNAGGLFGVLTNVVWTNHGPCAIDGFEAVRARLRRRGPVTVYGVDKFPRMVDYVVPTGVRIADADRVRLGAHLAPGTTVMHEGFVNYNAGTLGASMVEGRISAGVVVGDGSDVGGGASIMGTLSGGGTHVISIGKRCLLGANSGLGISLGDDCVVEAGLYVTAGTRVTMPDSNSVKARELSGSSNLLFRRNSVSGAVEVLARDGQGIALNEDLHAN</sequence>
<gene>
    <name evidence="1" type="primary">dapD</name>
    <name type="ordered locus">Rv1201c</name>
</gene>
<keyword id="KW-0002">3D-structure</keyword>
<keyword id="KW-0012">Acyltransferase</keyword>
<keyword id="KW-0028">Amino-acid biosynthesis</keyword>
<keyword id="KW-0963">Cytoplasm</keyword>
<keyword id="KW-0220">Diaminopimelate biosynthesis</keyword>
<keyword id="KW-0457">Lysine biosynthesis</keyword>
<keyword id="KW-0460">Magnesium</keyword>
<keyword id="KW-0479">Metal-binding</keyword>
<keyword id="KW-1185">Reference proteome</keyword>
<keyword id="KW-0808">Transferase</keyword>
<comment type="function">
    <text evidence="3">Catalyzes the conversion of the cyclic tetrahydrodipicolinate (THDP) into the acyclic N-succinyl-L-2-amino-6-oxopimelate using succinyl-CoA.</text>
</comment>
<comment type="catalytic activity">
    <reaction evidence="3">
        <text>(S)-2,3,4,5-tetrahydrodipicolinate + succinyl-CoA + H2O = (S)-2-succinylamino-6-oxoheptanedioate + CoA</text>
        <dbReference type="Rhea" id="RHEA:17325"/>
        <dbReference type="ChEBI" id="CHEBI:15377"/>
        <dbReference type="ChEBI" id="CHEBI:15685"/>
        <dbReference type="ChEBI" id="CHEBI:16845"/>
        <dbReference type="ChEBI" id="CHEBI:57287"/>
        <dbReference type="ChEBI" id="CHEBI:57292"/>
        <dbReference type="EC" id="2.3.1.117"/>
    </reaction>
</comment>
<comment type="activity regulation">
    <text evidence="3">Is activated by Mg(2+), Ca(2+) and Mn(2+), and inhibited by Zn(2+) and Co(2+). Is not inhibited by EDTA in vitro.</text>
</comment>
<comment type="pathway">
    <text evidence="1">Amino-acid biosynthesis; L-lysine biosynthesis via DAP pathway; LL-2,6-diaminopimelate from (S)-tetrahydrodipicolinate (succinylase route): step 1/3.</text>
</comment>
<comment type="subunit">
    <text evidence="2">Homotrimer.</text>
</comment>
<comment type="subcellular location">
    <subcellularLocation>
        <location evidence="1">Cytoplasm</location>
    </subcellularLocation>
</comment>
<comment type="miscellaneous">
    <text evidence="4">Was identified as a high-confidence drug target.</text>
</comment>
<comment type="similarity">
    <text evidence="1">Belongs to the type 2 tetrahydrodipicolinate N-succinyltransferase family.</text>
</comment>
<feature type="chain" id="PRO_0000412254" description="2,3,4,5-tetrahydropyridine-2,6-dicarboxylate N-succinyltransferase">
    <location>
        <begin position="1"/>
        <end position="317"/>
    </location>
</feature>
<feature type="active site" description="Acyl-anhydride intermediate" evidence="5">
    <location>
        <position position="199"/>
    </location>
</feature>
<feature type="binding site" evidence="3">
    <location>
        <position position="166"/>
    </location>
    <ligand>
        <name>Mg(2+)</name>
        <dbReference type="ChEBI" id="CHEBI:18420"/>
        <label>1</label>
        <note>ligand shared between trimeric partners</note>
    </ligand>
</feature>
<feature type="binding site" evidence="3">
    <location>
        <position position="183"/>
    </location>
    <ligand>
        <name>Mg(2+)</name>
        <dbReference type="ChEBI" id="CHEBI:18420"/>
        <label>2</label>
        <note>ligand shared between trimeric partners</note>
    </ligand>
</feature>
<feature type="binding site" evidence="3">
    <location>
        <position position="201"/>
    </location>
    <ligand>
        <name>succinyl-CoA</name>
        <dbReference type="ChEBI" id="CHEBI:57292"/>
    </ligand>
</feature>
<feature type="binding site" evidence="3">
    <location>
        <position position="216"/>
    </location>
    <ligand>
        <name>succinyl-CoA</name>
        <dbReference type="ChEBI" id="CHEBI:57292"/>
    </ligand>
</feature>
<feature type="binding site" evidence="3">
    <location>
        <position position="219"/>
    </location>
    <ligand>
        <name>succinyl-CoA</name>
        <dbReference type="ChEBI" id="CHEBI:57292"/>
    </ligand>
</feature>
<feature type="binding site" evidence="3">
    <location>
        <position position="242"/>
    </location>
    <ligand>
        <name>succinyl-CoA</name>
        <dbReference type="ChEBI" id="CHEBI:57292"/>
    </ligand>
</feature>
<feature type="binding site" evidence="3">
    <location>
        <begin position="257"/>
        <end position="258"/>
    </location>
    <ligand>
        <name>succinyl-CoA</name>
        <dbReference type="ChEBI" id="CHEBI:57292"/>
    </ligand>
</feature>
<feature type="binding site" evidence="3">
    <location>
        <position position="265"/>
    </location>
    <ligand>
        <name>succinyl-CoA</name>
        <dbReference type="ChEBI" id="CHEBI:57292"/>
    </ligand>
</feature>
<feature type="binding site" evidence="3">
    <location>
        <position position="277"/>
    </location>
    <ligand>
        <name>succinyl-CoA</name>
        <dbReference type="ChEBI" id="CHEBI:57292"/>
    </ligand>
</feature>
<feature type="binding site" evidence="3">
    <location>
        <begin position="290"/>
        <end position="293"/>
    </location>
    <ligand>
        <name>succinyl-CoA</name>
        <dbReference type="ChEBI" id="CHEBI:57292"/>
    </ligand>
</feature>
<feature type="mutagenesis site" description="Loss of activity." evidence="3">
    <original>E</original>
    <variation>A</variation>
    <location>
        <position position="199"/>
    </location>
</feature>
<feature type="mutagenesis site" description="Loss of activity." evidence="3">
    <original>G</original>
    <variation>P</variation>
    <location>
        <position position="222"/>
    </location>
</feature>
<feature type="strand" evidence="7">
    <location>
        <begin position="5"/>
        <end position="15"/>
    </location>
</feature>
<feature type="strand" evidence="7">
    <location>
        <begin position="21"/>
        <end position="25"/>
    </location>
</feature>
<feature type="strand" evidence="7">
    <location>
        <begin position="30"/>
        <end position="34"/>
    </location>
</feature>
<feature type="strand" evidence="7">
    <location>
        <begin position="38"/>
        <end position="41"/>
    </location>
</feature>
<feature type="helix" evidence="7">
    <location>
        <begin position="44"/>
        <end position="46"/>
    </location>
</feature>
<feature type="helix" evidence="7">
    <location>
        <begin position="49"/>
        <end position="52"/>
    </location>
</feature>
<feature type="strand" evidence="7">
    <location>
        <begin position="56"/>
        <end position="58"/>
    </location>
</feature>
<feature type="turn" evidence="7">
    <location>
        <begin position="59"/>
        <end position="62"/>
    </location>
</feature>
<feature type="strand" evidence="7">
    <location>
        <begin position="63"/>
        <end position="73"/>
    </location>
</feature>
<feature type="helix" evidence="7">
    <location>
        <begin position="82"/>
        <end position="93"/>
    </location>
</feature>
<feature type="helix" evidence="7">
    <location>
        <begin position="107"/>
        <end position="110"/>
    </location>
</feature>
<feature type="strand" evidence="7">
    <location>
        <begin position="114"/>
        <end position="117"/>
    </location>
</feature>
<feature type="strand" evidence="7">
    <location>
        <begin position="120"/>
        <end position="124"/>
    </location>
</feature>
<feature type="helix" evidence="7">
    <location>
        <begin position="127"/>
        <end position="134"/>
    </location>
</feature>
<feature type="turn" evidence="7">
    <location>
        <begin position="135"/>
        <end position="137"/>
    </location>
</feature>
<feature type="strand" evidence="7">
    <location>
        <begin position="142"/>
        <end position="148"/>
    </location>
</feature>
<feature type="helix" evidence="7">
    <location>
        <begin position="151"/>
        <end position="153"/>
    </location>
</feature>
<feature type="strand" evidence="7">
    <location>
        <begin position="161"/>
        <end position="163"/>
    </location>
</feature>
<feature type="helix" evidence="7">
    <location>
        <begin position="165"/>
        <end position="167"/>
    </location>
</feature>
<feature type="strand" evidence="7">
    <location>
        <begin position="172"/>
        <end position="174"/>
    </location>
</feature>
<feature type="strand" evidence="6">
    <location>
        <begin position="178"/>
        <end position="180"/>
    </location>
</feature>
<feature type="strand" evidence="7">
    <location>
        <begin position="190"/>
        <end position="194"/>
    </location>
</feature>
<feature type="strand" evidence="7">
    <location>
        <begin position="200"/>
        <end position="202"/>
    </location>
</feature>
<feature type="strand" evidence="7">
    <location>
        <begin position="267"/>
        <end position="269"/>
    </location>
</feature>
<feature type="strand" evidence="7">
    <location>
        <begin position="275"/>
        <end position="277"/>
    </location>
</feature>
<feature type="helix" evidence="7">
    <location>
        <begin position="278"/>
        <end position="281"/>
    </location>
</feature>
<feature type="strand" evidence="7">
    <location>
        <begin position="285"/>
        <end position="291"/>
    </location>
</feature>
<feature type="turn" evidence="7">
    <location>
        <begin position="293"/>
        <end position="295"/>
    </location>
</feature>
<feature type="strand" evidence="7">
    <location>
        <begin position="298"/>
        <end position="303"/>
    </location>
</feature>
<name>DAPD_MYCTU</name>